<comment type="function">
    <text evidence="1">Catalyzes the isomerization between 2-isopropylmalate and 3-isopropylmalate, via the formation of 2-isopropylmaleate.</text>
</comment>
<comment type="catalytic activity">
    <reaction evidence="1">
        <text>(2R,3S)-3-isopropylmalate = (2S)-2-isopropylmalate</text>
        <dbReference type="Rhea" id="RHEA:32287"/>
        <dbReference type="ChEBI" id="CHEBI:1178"/>
        <dbReference type="ChEBI" id="CHEBI:35121"/>
        <dbReference type="EC" id="4.2.1.33"/>
    </reaction>
</comment>
<comment type="cofactor">
    <cofactor evidence="1">
        <name>[4Fe-4S] cluster</name>
        <dbReference type="ChEBI" id="CHEBI:49883"/>
    </cofactor>
    <text evidence="1">Binds 1 [4Fe-4S] cluster per subunit.</text>
</comment>
<comment type="pathway">
    <text evidence="1">Amino-acid biosynthesis; L-leucine biosynthesis; L-leucine from 3-methyl-2-oxobutanoate: step 2/4.</text>
</comment>
<comment type="subunit">
    <text evidence="1">Heterodimer of LeuC and LeuD.</text>
</comment>
<comment type="similarity">
    <text evidence="1">Belongs to the aconitase/IPM isomerase family. LeuC type 1 subfamily.</text>
</comment>
<evidence type="ECO:0000255" key="1">
    <source>
        <dbReference type="HAMAP-Rule" id="MF_01026"/>
    </source>
</evidence>
<sequence>MPVTNSPRTLFDKIWDDHVVERLEDGTCILYIDRHLVHEVTSPQAFEGLRMSGRRVRRPDATVAVADHNVPTSDRSKPIEEPQSRLQIETLEKNVAEFGVPYFPLRSASQGIVHVVGPEQGISLPGMTIVCGDSHTSTHGALGSLAFGIGTSEVEHVLATQTILQKPAKNMRVSVEGKVGPGVTAKDILLAIIGRIGTAGGTGHVIEFAGSAIRDLDMAGRMTLCNMSIEAGARAGLVAPDETTFAYVKGRPFAPKGEAFEQACDYWRSLASDDGAYFDTEVTLAAEEIIPSVTWGTSPQNVLPIDGSVPSPSDEPDPARAAQIQRALDYMGLEAGQKIAGTPVDVVFIGSCTNSRLEDLRAAADVVRGRHVAEGVRAMIVPGSGLVKHAAEAEGLDKVFLDAGFEWREAGCSMCLGMNPDRLTPGQRCASTSNRNFEGRQGPDGRTHLCSPAMAAAAAVTGRLCDVRELVKETV</sequence>
<feature type="chain" id="PRO_0000076750" description="3-isopropylmalate dehydratase large subunit">
    <location>
        <begin position="1"/>
        <end position="475"/>
    </location>
</feature>
<feature type="binding site" evidence="1">
    <location>
        <position position="352"/>
    </location>
    <ligand>
        <name>[4Fe-4S] cluster</name>
        <dbReference type="ChEBI" id="CHEBI:49883"/>
    </ligand>
</feature>
<feature type="binding site" evidence="1">
    <location>
        <position position="412"/>
    </location>
    <ligand>
        <name>[4Fe-4S] cluster</name>
        <dbReference type="ChEBI" id="CHEBI:49883"/>
    </ligand>
</feature>
<feature type="binding site" evidence="1">
    <location>
        <position position="415"/>
    </location>
    <ligand>
        <name>[4Fe-4S] cluster</name>
        <dbReference type="ChEBI" id="CHEBI:49883"/>
    </ligand>
</feature>
<gene>
    <name evidence="1" type="primary">leuC</name>
    <name type="ordered locus">GOX0193</name>
</gene>
<protein>
    <recommendedName>
        <fullName evidence="1">3-isopropylmalate dehydratase large subunit</fullName>
        <ecNumber evidence="1">4.2.1.33</ecNumber>
    </recommendedName>
    <alternativeName>
        <fullName evidence="1">Alpha-IPM isomerase</fullName>
        <shortName evidence="1">IPMI</shortName>
    </alternativeName>
    <alternativeName>
        <fullName evidence="1">Isopropylmalate isomerase</fullName>
    </alternativeName>
</protein>
<keyword id="KW-0004">4Fe-4S</keyword>
<keyword id="KW-0028">Amino-acid biosynthesis</keyword>
<keyword id="KW-0100">Branched-chain amino acid biosynthesis</keyword>
<keyword id="KW-0408">Iron</keyword>
<keyword id="KW-0411">Iron-sulfur</keyword>
<keyword id="KW-0432">Leucine biosynthesis</keyword>
<keyword id="KW-0456">Lyase</keyword>
<keyword id="KW-0479">Metal-binding</keyword>
<keyword id="KW-1185">Reference proteome</keyword>
<dbReference type="EC" id="4.2.1.33" evidence="1"/>
<dbReference type="EMBL" id="CP000009">
    <property type="protein sequence ID" value="AAW59983.1"/>
    <property type="molecule type" value="Genomic_DNA"/>
</dbReference>
<dbReference type="RefSeq" id="WP_011251786.1">
    <property type="nucleotide sequence ID" value="NC_006677.1"/>
</dbReference>
<dbReference type="SMR" id="Q5FUG3"/>
<dbReference type="STRING" id="290633.GOX0193"/>
<dbReference type="KEGG" id="gox:GOX0193"/>
<dbReference type="eggNOG" id="COG0065">
    <property type="taxonomic scope" value="Bacteria"/>
</dbReference>
<dbReference type="HOGENOM" id="CLU_006714_3_4_5"/>
<dbReference type="UniPathway" id="UPA00048">
    <property type="reaction ID" value="UER00071"/>
</dbReference>
<dbReference type="Proteomes" id="UP000006375">
    <property type="component" value="Chromosome"/>
</dbReference>
<dbReference type="GO" id="GO:0003861">
    <property type="term" value="F:3-isopropylmalate dehydratase activity"/>
    <property type="evidence" value="ECO:0007669"/>
    <property type="project" value="UniProtKB-UniRule"/>
</dbReference>
<dbReference type="GO" id="GO:0051539">
    <property type="term" value="F:4 iron, 4 sulfur cluster binding"/>
    <property type="evidence" value="ECO:0007669"/>
    <property type="project" value="UniProtKB-KW"/>
</dbReference>
<dbReference type="GO" id="GO:0046872">
    <property type="term" value="F:metal ion binding"/>
    <property type="evidence" value="ECO:0007669"/>
    <property type="project" value="UniProtKB-KW"/>
</dbReference>
<dbReference type="GO" id="GO:0009098">
    <property type="term" value="P:L-leucine biosynthetic process"/>
    <property type="evidence" value="ECO:0007669"/>
    <property type="project" value="UniProtKB-UniRule"/>
</dbReference>
<dbReference type="CDD" id="cd01583">
    <property type="entry name" value="IPMI"/>
    <property type="match status" value="1"/>
</dbReference>
<dbReference type="FunFam" id="3.30.499.10:FF:000006">
    <property type="entry name" value="3-isopropylmalate dehydratase large subunit"/>
    <property type="match status" value="1"/>
</dbReference>
<dbReference type="FunFam" id="3.30.499.10:FF:000007">
    <property type="entry name" value="3-isopropylmalate dehydratase large subunit"/>
    <property type="match status" value="1"/>
</dbReference>
<dbReference type="Gene3D" id="3.30.499.10">
    <property type="entry name" value="Aconitase, domain 3"/>
    <property type="match status" value="2"/>
</dbReference>
<dbReference type="HAMAP" id="MF_01026">
    <property type="entry name" value="LeuC_type1"/>
    <property type="match status" value="1"/>
</dbReference>
<dbReference type="InterPro" id="IPR004430">
    <property type="entry name" value="3-IsopropMal_deHydase_lsu"/>
</dbReference>
<dbReference type="InterPro" id="IPR015931">
    <property type="entry name" value="Acnase/IPM_dHydase_lsu_aba_1/3"/>
</dbReference>
<dbReference type="InterPro" id="IPR001030">
    <property type="entry name" value="Acoase/IPM_deHydtase_lsu_aba"/>
</dbReference>
<dbReference type="InterPro" id="IPR018136">
    <property type="entry name" value="Aconitase_4Fe-4S_BS"/>
</dbReference>
<dbReference type="InterPro" id="IPR036008">
    <property type="entry name" value="Aconitase_4Fe-4S_dom"/>
</dbReference>
<dbReference type="InterPro" id="IPR050067">
    <property type="entry name" value="IPM_dehydratase_rel_enz"/>
</dbReference>
<dbReference type="InterPro" id="IPR033941">
    <property type="entry name" value="IPMI_cat"/>
</dbReference>
<dbReference type="NCBIfam" id="TIGR00170">
    <property type="entry name" value="leuC"/>
    <property type="match status" value="1"/>
</dbReference>
<dbReference type="NCBIfam" id="NF004016">
    <property type="entry name" value="PRK05478.1"/>
    <property type="match status" value="1"/>
</dbReference>
<dbReference type="NCBIfam" id="NF009116">
    <property type="entry name" value="PRK12466.1"/>
    <property type="match status" value="1"/>
</dbReference>
<dbReference type="PANTHER" id="PTHR43822:SF9">
    <property type="entry name" value="3-ISOPROPYLMALATE DEHYDRATASE"/>
    <property type="match status" value="1"/>
</dbReference>
<dbReference type="PANTHER" id="PTHR43822">
    <property type="entry name" value="HOMOACONITASE, MITOCHONDRIAL-RELATED"/>
    <property type="match status" value="1"/>
</dbReference>
<dbReference type="Pfam" id="PF00330">
    <property type="entry name" value="Aconitase"/>
    <property type="match status" value="1"/>
</dbReference>
<dbReference type="PRINTS" id="PR00415">
    <property type="entry name" value="ACONITASE"/>
</dbReference>
<dbReference type="SUPFAM" id="SSF53732">
    <property type="entry name" value="Aconitase iron-sulfur domain"/>
    <property type="match status" value="1"/>
</dbReference>
<dbReference type="PROSITE" id="PS00450">
    <property type="entry name" value="ACONITASE_1"/>
    <property type="match status" value="1"/>
</dbReference>
<dbReference type="PROSITE" id="PS01244">
    <property type="entry name" value="ACONITASE_2"/>
    <property type="match status" value="1"/>
</dbReference>
<organism>
    <name type="scientific">Gluconobacter oxydans (strain 621H)</name>
    <name type="common">Gluconobacter suboxydans</name>
    <dbReference type="NCBI Taxonomy" id="290633"/>
    <lineage>
        <taxon>Bacteria</taxon>
        <taxon>Pseudomonadati</taxon>
        <taxon>Pseudomonadota</taxon>
        <taxon>Alphaproteobacteria</taxon>
        <taxon>Acetobacterales</taxon>
        <taxon>Acetobacteraceae</taxon>
        <taxon>Gluconobacter</taxon>
    </lineage>
</organism>
<name>LEUC_GLUOX</name>
<accession>Q5FUG3</accession>
<reference key="1">
    <citation type="journal article" date="2005" name="Nat. Biotechnol.">
        <title>Complete genome sequence of the acetic acid bacterium Gluconobacter oxydans.</title>
        <authorList>
            <person name="Prust C."/>
            <person name="Hoffmeister M."/>
            <person name="Liesegang H."/>
            <person name="Wiezer A."/>
            <person name="Fricke W.F."/>
            <person name="Ehrenreich A."/>
            <person name="Gottschalk G."/>
            <person name="Deppenmeier U."/>
        </authorList>
    </citation>
    <scope>NUCLEOTIDE SEQUENCE [LARGE SCALE GENOMIC DNA]</scope>
    <source>
        <strain>621H</strain>
    </source>
</reference>
<proteinExistence type="inferred from homology"/>